<sequence>MSRSLSECIDQGRGLVPADLVLKHGRVFDLVTGELVQTDVAICGDRIVGTFGTYTGRREIDCRGRILVPGFIDTHLHVESSLVTPFEFDRCVTPRGITTAICDPHEIANVCGLEGIRYFLEASAHLVMDLRVQLSSCVPSTHMETAGAALEAKDLAPLMDHPRVIGLAEFMNFPGVLMKDPGCMAKLEAFRGRHIDGHAPLLRGKDLNGYIAAGIRTEHEATTAEEALEKLRKGMRVLIREGSVSKDLHALVSILTERHAPYLCLCTDDRNPLDIAEHGHIDHMIRTAIRLGAPPLAVYRAASLSAADAFGLKDRGLIAPGRRADIAVLDSLEGCHAALVLAGGVVADDAAFSARSDIEPVARASVKVAEIAPEAFRCPGNRADTPVIGILPGKIITEHLTAEIEPVDGDKRPDPVRDLARIAVIERHGKTGGRATGFVRGFGMARGAIASTVCHDHHNLAVVGIDYADMALAANRLRALEGGFAVAAGGEILAELALPVGGLMSLRPFEEVRDALVTLREAARSLGVTLEEPFLQLAFLALPVIPHLKITDRGMVDVDRFEILP</sequence>
<protein>
    <recommendedName>
        <fullName evidence="1">Adenine deaminase</fullName>
        <shortName evidence="1">Adenase</shortName>
        <shortName evidence="1">Adenine aminase</shortName>
        <ecNumber evidence="1">3.5.4.2</ecNumber>
    </recommendedName>
</protein>
<gene>
    <name evidence="1" type="primary">ade</name>
    <name type="ordered locus">RHOS4_26000</name>
    <name type="ORF">RSP_0985</name>
</gene>
<dbReference type="EC" id="3.5.4.2" evidence="1"/>
<dbReference type="EMBL" id="CP000143">
    <property type="protein sequence ID" value="ABA80168.1"/>
    <property type="molecule type" value="Genomic_DNA"/>
</dbReference>
<dbReference type="RefSeq" id="WP_011338640.1">
    <property type="nucleotide sequence ID" value="NC_007493.2"/>
</dbReference>
<dbReference type="RefSeq" id="YP_354069.1">
    <property type="nucleotide sequence ID" value="NC_007493.2"/>
</dbReference>
<dbReference type="SMR" id="Q3IZ66"/>
<dbReference type="STRING" id="272943.RSP_0985"/>
<dbReference type="DNASU" id="3720739"/>
<dbReference type="EnsemblBacteria" id="ABA80168">
    <property type="protein sequence ID" value="ABA80168"/>
    <property type="gene ID" value="RSP_0985"/>
</dbReference>
<dbReference type="GeneID" id="3720739"/>
<dbReference type="KEGG" id="rsp:RSP_0985"/>
<dbReference type="PATRIC" id="fig|272943.9.peg.2957"/>
<dbReference type="eggNOG" id="COG1001">
    <property type="taxonomic scope" value="Bacteria"/>
</dbReference>
<dbReference type="OrthoDB" id="9775607at2"/>
<dbReference type="PhylomeDB" id="Q3IZ66"/>
<dbReference type="Proteomes" id="UP000002703">
    <property type="component" value="Chromosome 1"/>
</dbReference>
<dbReference type="GO" id="GO:0000034">
    <property type="term" value="F:adenine deaminase activity"/>
    <property type="evidence" value="ECO:0007669"/>
    <property type="project" value="UniProtKB-UniRule"/>
</dbReference>
<dbReference type="GO" id="GO:0006146">
    <property type="term" value="P:adenine catabolic process"/>
    <property type="evidence" value="ECO:0007669"/>
    <property type="project" value="InterPro"/>
</dbReference>
<dbReference type="CDD" id="cd01295">
    <property type="entry name" value="AdeC"/>
    <property type="match status" value="1"/>
</dbReference>
<dbReference type="Gene3D" id="3.20.20.140">
    <property type="entry name" value="Metal-dependent hydrolases"/>
    <property type="match status" value="1"/>
</dbReference>
<dbReference type="Gene3D" id="2.30.40.10">
    <property type="entry name" value="Urease, subunit C, domain 1"/>
    <property type="match status" value="1"/>
</dbReference>
<dbReference type="HAMAP" id="MF_01518">
    <property type="entry name" value="Adenine_deamin"/>
    <property type="match status" value="1"/>
</dbReference>
<dbReference type="InterPro" id="IPR006679">
    <property type="entry name" value="Adenine_deam"/>
</dbReference>
<dbReference type="InterPro" id="IPR026912">
    <property type="entry name" value="Adenine_deam_C"/>
</dbReference>
<dbReference type="InterPro" id="IPR006680">
    <property type="entry name" value="Amidohydro-rel"/>
</dbReference>
<dbReference type="InterPro" id="IPR011059">
    <property type="entry name" value="Metal-dep_hydrolase_composite"/>
</dbReference>
<dbReference type="InterPro" id="IPR032466">
    <property type="entry name" value="Metal_Hydrolase"/>
</dbReference>
<dbReference type="NCBIfam" id="TIGR01178">
    <property type="entry name" value="ade"/>
    <property type="match status" value="1"/>
</dbReference>
<dbReference type="PANTHER" id="PTHR11113:SF2">
    <property type="entry name" value="ADENINE DEAMINASE"/>
    <property type="match status" value="1"/>
</dbReference>
<dbReference type="PANTHER" id="PTHR11113">
    <property type="entry name" value="N-ACETYLGLUCOSAMINE-6-PHOSPHATE DEACETYLASE"/>
    <property type="match status" value="1"/>
</dbReference>
<dbReference type="Pfam" id="PF13382">
    <property type="entry name" value="Adenine_deam_C"/>
    <property type="match status" value="1"/>
</dbReference>
<dbReference type="Pfam" id="PF01979">
    <property type="entry name" value="Amidohydro_1"/>
    <property type="match status" value="1"/>
</dbReference>
<dbReference type="SUPFAM" id="SSF51338">
    <property type="entry name" value="Composite domain of metallo-dependent hydrolases"/>
    <property type="match status" value="1"/>
</dbReference>
<dbReference type="SUPFAM" id="SSF51556">
    <property type="entry name" value="Metallo-dependent hydrolases"/>
    <property type="match status" value="1"/>
</dbReference>
<keyword id="KW-0378">Hydrolase</keyword>
<keyword id="KW-0464">Manganese</keyword>
<keyword id="KW-1185">Reference proteome</keyword>
<feature type="chain" id="PRO_0000296729" description="Adenine deaminase">
    <location>
        <begin position="1"/>
        <end position="565"/>
    </location>
</feature>
<proteinExistence type="inferred from homology"/>
<reference key="1">
    <citation type="submission" date="2005-09" db="EMBL/GenBank/DDBJ databases">
        <title>Complete sequence of chromosome 1 of Rhodobacter sphaeroides 2.4.1.</title>
        <authorList>
            <person name="Copeland A."/>
            <person name="Lucas S."/>
            <person name="Lapidus A."/>
            <person name="Barry K."/>
            <person name="Detter J.C."/>
            <person name="Glavina T."/>
            <person name="Hammon N."/>
            <person name="Israni S."/>
            <person name="Pitluck S."/>
            <person name="Richardson P."/>
            <person name="Mackenzie C."/>
            <person name="Choudhary M."/>
            <person name="Larimer F."/>
            <person name="Hauser L.J."/>
            <person name="Land M."/>
            <person name="Donohue T.J."/>
            <person name="Kaplan S."/>
        </authorList>
    </citation>
    <scope>NUCLEOTIDE SEQUENCE [LARGE SCALE GENOMIC DNA]</scope>
    <source>
        <strain>ATCC 17023 / DSM 158 / JCM 6121 / CCUG 31486 / LMG 2827 / NBRC 12203 / NCIMB 8253 / ATH 2.4.1.</strain>
    </source>
</reference>
<evidence type="ECO:0000255" key="1">
    <source>
        <dbReference type="HAMAP-Rule" id="MF_01518"/>
    </source>
</evidence>
<name>ADEC_CERS4</name>
<comment type="catalytic activity">
    <reaction evidence="1">
        <text>adenine + H2O + H(+) = hypoxanthine + NH4(+)</text>
        <dbReference type="Rhea" id="RHEA:23688"/>
        <dbReference type="ChEBI" id="CHEBI:15377"/>
        <dbReference type="ChEBI" id="CHEBI:15378"/>
        <dbReference type="ChEBI" id="CHEBI:16708"/>
        <dbReference type="ChEBI" id="CHEBI:17368"/>
        <dbReference type="ChEBI" id="CHEBI:28938"/>
        <dbReference type="EC" id="3.5.4.2"/>
    </reaction>
</comment>
<comment type="cofactor">
    <cofactor evidence="1">
        <name>Mn(2+)</name>
        <dbReference type="ChEBI" id="CHEBI:29035"/>
    </cofactor>
</comment>
<comment type="similarity">
    <text evidence="1">Belongs to the metallo-dependent hydrolases superfamily. Adenine deaminase family.</text>
</comment>
<organism>
    <name type="scientific">Cereibacter sphaeroides (strain ATCC 17023 / DSM 158 / JCM 6121 / CCUG 31486 / LMG 2827 / NBRC 12203 / NCIMB 8253 / ATH 2.4.1.)</name>
    <name type="common">Rhodobacter sphaeroides</name>
    <dbReference type="NCBI Taxonomy" id="272943"/>
    <lineage>
        <taxon>Bacteria</taxon>
        <taxon>Pseudomonadati</taxon>
        <taxon>Pseudomonadota</taxon>
        <taxon>Alphaproteobacteria</taxon>
        <taxon>Rhodobacterales</taxon>
        <taxon>Paracoccaceae</taxon>
        <taxon>Cereibacter</taxon>
    </lineage>
</organism>
<accession>Q3IZ66</accession>